<geneLocation type="mitochondrion"/>
<protein>
    <recommendedName>
        <fullName evidence="2">Small ribosomal subunit protein uS12m</fullName>
    </recommendedName>
    <alternativeName>
        <fullName>Ribosomal protein S12, mitochondrial</fullName>
    </alternativeName>
</protein>
<name>RT12_RAPSA</name>
<comment type="function">
    <text>Protein S12 is involved in the translation initiation step.</text>
</comment>
<comment type="subcellular location">
    <subcellularLocation>
        <location>Mitochondrion</location>
    </subcellularLocation>
</comment>
<comment type="similarity">
    <text evidence="2">Belongs to the universal ribosomal protein uS12 family.</text>
</comment>
<organism>
    <name type="scientific">Raphanus sativus</name>
    <name type="common">Radish</name>
    <name type="synonym">Raphanus raphanistrum var. sativus</name>
    <dbReference type="NCBI Taxonomy" id="3726"/>
    <lineage>
        <taxon>Eukaryota</taxon>
        <taxon>Viridiplantae</taxon>
        <taxon>Streptophyta</taxon>
        <taxon>Embryophyta</taxon>
        <taxon>Tracheophyta</taxon>
        <taxon>Spermatophyta</taxon>
        <taxon>Magnoliopsida</taxon>
        <taxon>eudicotyledons</taxon>
        <taxon>Gunneridae</taxon>
        <taxon>Pentapetalae</taxon>
        <taxon>rosids</taxon>
        <taxon>malvids</taxon>
        <taxon>Brassicales</taxon>
        <taxon>Brassicaceae</taxon>
        <taxon>Brassiceae</taxon>
        <taxon>Raphanus</taxon>
    </lineage>
</organism>
<accession>P50892</accession>
<dbReference type="EMBL" id="U43506">
    <property type="protein sequence ID" value="AAB18649.1"/>
    <property type="molecule type" value="Genomic_DNA"/>
</dbReference>
<dbReference type="EMBL" id="U43507">
    <property type="protein sequence ID" value="AAB18651.1"/>
    <property type="molecule type" value="Genomic_DNA"/>
</dbReference>
<dbReference type="PIR" id="S70001">
    <property type="entry name" value="S70001"/>
</dbReference>
<dbReference type="RefSeq" id="YP_006665995.1">
    <property type="nucleotide sequence ID" value="NC_018551.1"/>
</dbReference>
<dbReference type="SMR" id="P50892"/>
<dbReference type="GeneID" id="13630130"/>
<dbReference type="KEGG" id="rsz:13630130"/>
<dbReference type="OrthoDB" id="414309at2759"/>
<dbReference type="Proteomes" id="UP000504610">
    <property type="component" value="Mitochondrion MT"/>
</dbReference>
<dbReference type="GO" id="GO:0005739">
    <property type="term" value="C:mitochondrion"/>
    <property type="evidence" value="ECO:0007669"/>
    <property type="project" value="UniProtKB-SubCell"/>
</dbReference>
<dbReference type="GO" id="GO:0015935">
    <property type="term" value="C:small ribosomal subunit"/>
    <property type="evidence" value="ECO:0007669"/>
    <property type="project" value="InterPro"/>
</dbReference>
<dbReference type="GO" id="GO:0003735">
    <property type="term" value="F:structural constituent of ribosome"/>
    <property type="evidence" value="ECO:0007669"/>
    <property type="project" value="InterPro"/>
</dbReference>
<dbReference type="GO" id="GO:0006412">
    <property type="term" value="P:translation"/>
    <property type="evidence" value="ECO:0007669"/>
    <property type="project" value="InterPro"/>
</dbReference>
<dbReference type="CDD" id="cd03368">
    <property type="entry name" value="Ribosomal_S12"/>
    <property type="match status" value="1"/>
</dbReference>
<dbReference type="FunFam" id="2.40.50.140:FF:000099">
    <property type="entry name" value="Ribosomal protein S12, mitochondrial"/>
    <property type="match status" value="1"/>
</dbReference>
<dbReference type="Gene3D" id="2.40.50.140">
    <property type="entry name" value="Nucleic acid-binding proteins"/>
    <property type="match status" value="1"/>
</dbReference>
<dbReference type="InterPro" id="IPR012340">
    <property type="entry name" value="NA-bd_OB-fold"/>
</dbReference>
<dbReference type="InterPro" id="IPR006032">
    <property type="entry name" value="Ribosomal_uS12"/>
</dbReference>
<dbReference type="InterPro" id="IPR005679">
    <property type="entry name" value="Ribosomal_uS12_bac"/>
</dbReference>
<dbReference type="NCBIfam" id="TIGR00981">
    <property type="entry name" value="rpsL_bact"/>
    <property type="match status" value="1"/>
</dbReference>
<dbReference type="PANTHER" id="PTHR11652">
    <property type="entry name" value="30S RIBOSOMAL PROTEIN S12 FAMILY MEMBER"/>
    <property type="match status" value="1"/>
</dbReference>
<dbReference type="Pfam" id="PF00164">
    <property type="entry name" value="Ribosom_S12_S23"/>
    <property type="match status" value="1"/>
</dbReference>
<dbReference type="PIRSF" id="PIRSF002133">
    <property type="entry name" value="Ribosomal_S12/S23"/>
    <property type="match status" value="1"/>
</dbReference>
<dbReference type="PRINTS" id="PR01034">
    <property type="entry name" value="RIBOSOMALS12"/>
</dbReference>
<dbReference type="SUPFAM" id="SSF50249">
    <property type="entry name" value="Nucleic acid-binding proteins"/>
    <property type="match status" value="1"/>
</dbReference>
<dbReference type="PROSITE" id="PS00055">
    <property type="entry name" value="RIBOSOMAL_S12"/>
    <property type="match status" value="1"/>
</dbReference>
<reference key="1">
    <citation type="journal article" date="1996" name="Curr. Genet.">
        <title>Characterization of the radish mitochondrial nad3/rps12 locus: analysis of recombination repeats and RNA editing.</title>
        <authorList>
            <person name="Rankin C.T."/>
            <person name="Cutright M.T."/>
            <person name="Makaroff C.A."/>
        </authorList>
    </citation>
    <scope>NUCLEOTIDE SEQUENCE [GENOMIC DNA]</scope>
    <source>
        <strain>cv. CRGC15</strain>
        <strain>cv. Scarlet Knight</strain>
    </source>
</reference>
<keyword id="KW-0496">Mitochondrion</keyword>
<keyword id="KW-1185">Reference proteome</keyword>
<keyword id="KW-0687">Ribonucleoprotein</keyword>
<keyword id="KW-0689">Ribosomal protein</keyword>
<gene>
    <name type="primary">RPS12</name>
</gene>
<feature type="chain" id="PRO_0000146448" description="Small ribosomal subunit protein uS12m">
    <location>
        <begin position="1"/>
        <end position="125"/>
    </location>
</feature>
<feature type="region of interest" description="Disordered" evidence="1">
    <location>
        <begin position="1"/>
        <end position="23"/>
    </location>
</feature>
<feature type="region of interest" description="Disordered" evidence="1">
    <location>
        <begin position="104"/>
        <end position="125"/>
    </location>
</feature>
<feature type="compositionally biased region" description="Basic and acidic residues" evidence="1">
    <location>
        <begin position="10"/>
        <end position="23"/>
    </location>
</feature>
<proteinExistence type="inferred from homology"/>
<evidence type="ECO:0000256" key="1">
    <source>
        <dbReference type="SAM" id="MobiDB-lite"/>
    </source>
</evidence>
<evidence type="ECO:0000305" key="2"/>
<sequence>MPTLNQLIRHGREEKRRTDRTRALDKCPQKLGACPRVSTRTPKKPNSAPRKIAKVRLSNRHDIFAHIPGEGHNSQEHSQVLIRGGRVKDSPGVKSHCIRGVKDLMGIPGRRSGRSKYGAEKPKSI</sequence>